<proteinExistence type="inferred from homology"/>
<sequence>MARVTVEDCLEHVENRFDLVLKAAKRAHILELGGAEPMVPRDNDKPAVLALREIAAGYDVTREGQEQETEEVDVGRNVLAETAKMNKAVASQKESEV</sequence>
<keyword id="KW-0240">DNA-directed RNA polymerase</keyword>
<keyword id="KW-0548">Nucleotidyltransferase</keyword>
<keyword id="KW-0804">Transcription</keyword>
<keyword id="KW-0808">Transferase</keyword>
<comment type="function">
    <text evidence="1">Promotes RNA polymerase assembly. Latches the N- and C-terminal regions of the beta' subunit thereby facilitating its interaction with the beta and alpha subunits.</text>
</comment>
<comment type="catalytic activity">
    <reaction evidence="1">
        <text>RNA(n) + a ribonucleoside 5'-triphosphate = RNA(n+1) + diphosphate</text>
        <dbReference type="Rhea" id="RHEA:21248"/>
        <dbReference type="Rhea" id="RHEA-COMP:14527"/>
        <dbReference type="Rhea" id="RHEA-COMP:17342"/>
        <dbReference type="ChEBI" id="CHEBI:33019"/>
        <dbReference type="ChEBI" id="CHEBI:61557"/>
        <dbReference type="ChEBI" id="CHEBI:140395"/>
        <dbReference type="EC" id="2.7.7.6"/>
    </reaction>
</comment>
<comment type="subunit">
    <text evidence="1">The RNAP catalytic core consists of 2 alpha, 1 beta, 1 beta' and 1 omega subunit. When a sigma factor is associated with the core the holoenzyme is formed, which can initiate transcription.</text>
</comment>
<comment type="similarity">
    <text evidence="1">Belongs to the RNA polymerase subunit omega family.</text>
</comment>
<name>RPOZ_COXBN</name>
<gene>
    <name evidence="1" type="primary">rpoZ</name>
    <name type="ordered locus">CBUD_1779</name>
</gene>
<reference key="1">
    <citation type="journal article" date="2009" name="Infect. Immun.">
        <title>Comparative genomics reveal extensive transposon-mediated genomic plasticity and diversity among potential effector proteins within the genus Coxiella.</title>
        <authorList>
            <person name="Beare P.A."/>
            <person name="Unsworth N."/>
            <person name="Andoh M."/>
            <person name="Voth D.E."/>
            <person name="Omsland A."/>
            <person name="Gilk S.D."/>
            <person name="Williams K.P."/>
            <person name="Sobral B.W."/>
            <person name="Kupko J.J. III"/>
            <person name="Porcella S.F."/>
            <person name="Samuel J.E."/>
            <person name="Heinzen R.A."/>
        </authorList>
    </citation>
    <scope>NUCLEOTIDE SEQUENCE [LARGE SCALE GENOMIC DNA]</scope>
    <source>
        <strain>Dugway 5J108-111</strain>
    </source>
</reference>
<organism>
    <name type="scientific">Coxiella burnetii (strain Dugway 5J108-111)</name>
    <dbReference type="NCBI Taxonomy" id="434922"/>
    <lineage>
        <taxon>Bacteria</taxon>
        <taxon>Pseudomonadati</taxon>
        <taxon>Pseudomonadota</taxon>
        <taxon>Gammaproteobacteria</taxon>
        <taxon>Legionellales</taxon>
        <taxon>Coxiellaceae</taxon>
        <taxon>Coxiella</taxon>
    </lineage>
</organism>
<evidence type="ECO:0000255" key="1">
    <source>
        <dbReference type="HAMAP-Rule" id="MF_00366"/>
    </source>
</evidence>
<protein>
    <recommendedName>
        <fullName evidence="1">DNA-directed RNA polymerase subunit omega</fullName>
        <shortName evidence="1">RNAP omega subunit</shortName>
        <ecNumber evidence="1">2.7.7.6</ecNumber>
    </recommendedName>
    <alternativeName>
        <fullName evidence="1">RNA polymerase omega subunit</fullName>
    </alternativeName>
    <alternativeName>
        <fullName evidence="1">Transcriptase subunit omega</fullName>
    </alternativeName>
</protein>
<dbReference type="EC" id="2.7.7.6" evidence="1"/>
<dbReference type="EMBL" id="CP000733">
    <property type="protein sequence ID" value="ABS76911.1"/>
    <property type="molecule type" value="Genomic_DNA"/>
</dbReference>
<dbReference type="RefSeq" id="WP_011997267.1">
    <property type="nucleotide sequence ID" value="NC_009727.1"/>
</dbReference>
<dbReference type="SMR" id="A9KGR6"/>
<dbReference type="KEGG" id="cbd:CBUD_1779"/>
<dbReference type="HOGENOM" id="CLU_125406_5_1_6"/>
<dbReference type="Proteomes" id="UP000008555">
    <property type="component" value="Chromosome"/>
</dbReference>
<dbReference type="GO" id="GO:0000428">
    <property type="term" value="C:DNA-directed RNA polymerase complex"/>
    <property type="evidence" value="ECO:0007669"/>
    <property type="project" value="UniProtKB-KW"/>
</dbReference>
<dbReference type="GO" id="GO:0003677">
    <property type="term" value="F:DNA binding"/>
    <property type="evidence" value="ECO:0007669"/>
    <property type="project" value="UniProtKB-UniRule"/>
</dbReference>
<dbReference type="GO" id="GO:0003899">
    <property type="term" value="F:DNA-directed RNA polymerase activity"/>
    <property type="evidence" value="ECO:0007669"/>
    <property type="project" value="UniProtKB-UniRule"/>
</dbReference>
<dbReference type="GO" id="GO:0006351">
    <property type="term" value="P:DNA-templated transcription"/>
    <property type="evidence" value="ECO:0007669"/>
    <property type="project" value="UniProtKB-UniRule"/>
</dbReference>
<dbReference type="Gene3D" id="3.90.940.10">
    <property type="match status" value="1"/>
</dbReference>
<dbReference type="HAMAP" id="MF_00366">
    <property type="entry name" value="RNApol_bact_RpoZ"/>
    <property type="match status" value="1"/>
</dbReference>
<dbReference type="InterPro" id="IPR003716">
    <property type="entry name" value="DNA-dir_RNA_pol_omega"/>
</dbReference>
<dbReference type="InterPro" id="IPR006110">
    <property type="entry name" value="Pol_omega/Rpo6/RPB6"/>
</dbReference>
<dbReference type="InterPro" id="IPR036161">
    <property type="entry name" value="RPB6/omega-like_sf"/>
</dbReference>
<dbReference type="NCBIfam" id="TIGR00690">
    <property type="entry name" value="rpoZ"/>
    <property type="match status" value="1"/>
</dbReference>
<dbReference type="PANTHER" id="PTHR34476">
    <property type="entry name" value="DNA-DIRECTED RNA POLYMERASE SUBUNIT OMEGA"/>
    <property type="match status" value="1"/>
</dbReference>
<dbReference type="PANTHER" id="PTHR34476:SF1">
    <property type="entry name" value="DNA-DIRECTED RNA POLYMERASE SUBUNIT OMEGA"/>
    <property type="match status" value="1"/>
</dbReference>
<dbReference type="Pfam" id="PF01192">
    <property type="entry name" value="RNA_pol_Rpb6"/>
    <property type="match status" value="1"/>
</dbReference>
<dbReference type="SMART" id="SM01409">
    <property type="entry name" value="RNA_pol_Rpb6"/>
    <property type="match status" value="1"/>
</dbReference>
<dbReference type="SUPFAM" id="SSF63562">
    <property type="entry name" value="RPB6/omega subunit-like"/>
    <property type="match status" value="1"/>
</dbReference>
<accession>A9KGR6</accession>
<feature type="chain" id="PRO_1000079625" description="DNA-directed RNA polymerase subunit omega">
    <location>
        <begin position="1"/>
        <end position="97"/>
    </location>
</feature>